<gene>
    <name evidence="1" type="primary">leuS</name>
    <name type="ordered locus">Smar_0118</name>
</gene>
<name>SYL_STAMF</name>
<organism>
    <name type="scientific">Staphylothermus marinus (strain ATCC 43588 / DSM 3639 / JCM 9404 / F1)</name>
    <dbReference type="NCBI Taxonomy" id="399550"/>
    <lineage>
        <taxon>Archaea</taxon>
        <taxon>Thermoproteota</taxon>
        <taxon>Thermoprotei</taxon>
        <taxon>Desulfurococcales</taxon>
        <taxon>Desulfurococcaceae</taxon>
        <taxon>Staphylothermus</taxon>
    </lineage>
</organism>
<accession>A3DKS1</accession>
<keyword id="KW-0030">Aminoacyl-tRNA synthetase</keyword>
<keyword id="KW-0067">ATP-binding</keyword>
<keyword id="KW-0963">Cytoplasm</keyword>
<keyword id="KW-0436">Ligase</keyword>
<keyword id="KW-0547">Nucleotide-binding</keyword>
<keyword id="KW-0648">Protein biosynthesis</keyword>
<keyword id="KW-1185">Reference proteome</keyword>
<proteinExistence type="inferred from homology"/>
<comment type="catalytic activity">
    <reaction evidence="1">
        <text>tRNA(Leu) + L-leucine + ATP = L-leucyl-tRNA(Leu) + AMP + diphosphate</text>
        <dbReference type="Rhea" id="RHEA:11688"/>
        <dbReference type="Rhea" id="RHEA-COMP:9613"/>
        <dbReference type="Rhea" id="RHEA-COMP:9622"/>
        <dbReference type="ChEBI" id="CHEBI:30616"/>
        <dbReference type="ChEBI" id="CHEBI:33019"/>
        <dbReference type="ChEBI" id="CHEBI:57427"/>
        <dbReference type="ChEBI" id="CHEBI:78442"/>
        <dbReference type="ChEBI" id="CHEBI:78494"/>
        <dbReference type="ChEBI" id="CHEBI:456215"/>
        <dbReference type="EC" id="6.1.1.4"/>
    </reaction>
</comment>
<comment type="subcellular location">
    <subcellularLocation>
        <location evidence="1">Cytoplasm</location>
    </subcellularLocation>
</comment>
<comment type="similarity">
    <text evidence="1">Belongs to the class-I aminoacyl-tRNA synthetase family.</text>
</comment>
<dbReference type="EC" id="6.1.1.4" evidence="1"/>
<dbReference type="EMBL" id="CP000575">
    <property type="protein sequence ID" value="ABN69231.1"/>
    <property type="molecule type" value="Genomic_DNA"/>
</dbReference>
<dbReference type="RefSeq" id="WP_011838422.1">
    <property type="nucleotide sequence ID" value="NC_009033.1"/>
</dbReference>
<dbReference type="SMR" id="A3DKS1"/>
<dbReference type="STRING" id="399550.Smar_0118"/>
<dbReference type="GeneID" id="4906962"/>
<dbReference type="KEGG" id="smr:Smar_0118"/>
<dbReference type="eggNOG" id="arCOG00809">
    <property type="taxonomic scope" value="Archaea"/>
</dbReference>
<dbReference type="HOGENOM" id="CLU_004174_0_0_2"/>
<dbReference type="OrthoDB" id="23906at2157"/>
<dbReference type="Proteomes" id="UP000000254">
    <property type="component" value="Chromosome"/>
</dbReference>
<dbReference type="GO" id="GO:0005737">
    <property type="term" value="C:cytoplasm"/>
    <property type="evidence" value="ECO:0007669"/>
    <property type="project" value="UniProtKB-SubCell"/>
</dbReference>
<dbReference type="GO" id="GO:0002161">
    <property type="term" value="F:aminoacyl-tRNA deacylase activity"/>
    <property type="evidence" value="ECO:0007669"/>
    <property type="project" value="InterPro"/>
</dbReference>
<dbReference type="GO" id="GO:0005524">
    <property type="term" value="F:ATP binding"/>
    <property type="evidence" value="ECO:0007669"/>
    <property type="project" value="UniProtKB-UniRule"/>
</dbReference>
<dbReference type="GO" id="GO:0004823">
    <property type="term" value="F:leucine-tRNA ligase activity"/>
    <property type="evidence" value="ECO:0007669"/>
    <property type="project" value="UniProtKB-UniRule"/>
</dbReference>
<dbReference type="GO" id="GO:0006429">
    <property type="term" value="P:leucyl-tRNA aminoacylation"/>
    <property type="evidence" value="ECO:0007669"/>
    <property type="project" value="UniProtKB-UniRule"/>
</dbReference>
<dbReference type="CDD" id="cd07959">
    <property type="entry name" value="Anticodon_Ia_Leu_AEc"/>
    <property type="match status" value="1"/>
</dbReference>
<dbReference type="Gene3D" id="3.30.2320.20">
    <property type="entry name" value="Class I aminoacyl-tRNA synthetases (RS)"/>
    <property type="match status" value="1"/>
</dbReference>
<dbReference type="Gene3D" id="3.40.50.620">
    <property type="entry name" value="HUPs"/>
    <property type="match status" value="1"/>
</dbReference>
<dbReference type="Gene3D" id="1.10.730.10">
    <property type="entry name" value="Isoleucyl-tRNA Synthetase, Domain 1"/>
    <property type="match status" value="1"/>
</dbReference>
<dbReference type="Gene3D" id="1.10.10.720">
    <property type="entry name" value="leucyl-tRNA synthetase"/>
    <property type="match status" value="1"/>
</dbReference>
<dbReference type="Gene3D" id="3.90.740.10">
    <property type="entry name" value="Valyl/Leucyl/Isoleucyl-tRNA synthetase, editing domain"/>
    <property type="match status" value="1"/>
</dbReference>
<dbReference type="HAMAP" id="MF_00049_A">
    <property type="entry name" value="Leu_tRNA_synth_A"/>
    <property type="match status" value="1"/>
</dbReference>
<dbReference type="InterPro" id="IPR001412">
    <property type="entry name" value="aa-tRNA-synth_I_CS"/>
</dbReference>
<dbReference type="InterPro" id="IPR002300">
    <property type="entry name" value="aa-tRNA-synth_Ia"/>
</dbReference>
<dbReference type="InterPro" id="IPR020791">
    <property type="entry name" value="Leu-tRNA-lgase_arc"/>
</dbReference>
<dbReference type="InterPro" id="IPR004493">
    <property type="entry name" value="Leu-tRNA-synth_Ia_arc/euk"/>
</dbReference>
<dbReference type="InterPro" id="IPR013155">
    <property type="entry name" value="M/V/L/I-tRNA-synth_anticd-bd"/>
</dbReference>
<dbReference type="InterPro" id="IPR014729">
    <property type="entry name" value="Rossmann-like_a/b/a_fold"/>
</dbReference>
<dbReference type="InterPro" id="IPR009080">
    <property type="entry name" value="tRNAsynth_Ia_anticodon-bd"/>
</dbReference>
<dbReference type="InterPro" id="IPR009008">
    <property type="entry name" value="Val/Leu/Ile-tRNA-synth_edit"/>
</dbReference>
<dbReference type="NCBIfam" id="TIGR00395">
    <property type="entry name" value="leuS_arch"/>
    <property type="match status" value="1"/>
</dbReference>
<dbReference type="NCBIfam" id="NF008957">
    <property type="entry name" value="PRK12300.1"/>
    <property type="match status" value="1"/>
</dbReference>
<dbReference type="PANTHER" id="PTHR45794:SF1">
    <property type="entry name" value="LEUCINE--TRNA LIGASE, CYTOPLASMIC"/>
    <property type="match status" value="1"/>
</dbReference>
<dbReference type="PANTHER" id="PTHR45794">
    <property type="entry name" value="LEUCYL-TRNA SYNTHETASE"/>
    <property type="match status" value="1"/>
</dbReference>
<dbReference type="Pfam" id="PF08264">
    <property type="entry name" value="Anticodon_1"/>
    <property type="match status" value="1"/>
</dbReference>
<dbReference type="Pfam" id="PF00133">
    <property type="entry name" value="tRNA-synt_1"/>
    <property type="match status" value="1"/>
</dbReference>
<dbReference type="SUPFAM" id="SSF47323">
    <property type="entry name" value="Anticodon-binding domain of a subclass of class I aminoacyl-tRNA synthetases"/>
    <property type="match status" value="1"/>
</dbReference>
<dbReference type="SUPFAM" id="SSF52374">
    <property type="entry name" value="Nucleotidylyl transferase"/>
    <property type="match status" value="1"/>
</dbReference>
<dbReference type="SUPFAM" id="SSF50677">
    <property type="entry name" value="ValRS/IleRS/LeuRS editing domain"/>
    <property type="match status" value="1"/>
</dbReference>
<dbReference type="PROSITE" id="PS00178">
    <property type="entry name" value="AA_TRNA_LIGASE_I"/>
    <property type="match status" value="1"/>
</dbReference>
<protein>
    <recommendedName>
        <fullName evidence="1">Leucine--tRNA ligase</fullName>
        <ecNumber evidence="1">6.1.1.4</ecNumber>
    </recommendedName>
    <alternativeName>
        <fullName evidence="1">Leucyl-tRNA synthetase</fullName>
        <shortName evidence="1">LeuRS</shortName>
    </alternativeName>
</protein>
<evidence type="ECO:0000255" key="1">
    <source>
        <dbReference type="HAMAP-Rule" id="MF_00049"/>
    </source>
</evidence>
<sequence length="969" mass="113418">MKKRDFLEWLRSVEAKWQSKWMEKKIFEPRIEPDKPKYFITVPYPYTNAPLHIGHGRTYTIGDIIARYKRLRGYNVLFPMAFHITGTPIIAISERISRGEEEIINRYKSYIAKYVKDPVEIEKIIESFKDPLNLAVFFAERVHMDFDALGYSIDWRRRFHTGEPIYNAFVTWQFLKLREKGLIKRGDHVVTYCLLHKQPEGEDDIQDADVNPVEILEFTAIKFKLLGEENTYLVAATLRPETLFGATNLWVKPDADYVVVEWRGENIIVSKEALVKLQHQHPLDEFKVVGEMKGRELVGKKVVSPLGNELIVLPADFVDPDNATGIVYSEPSDAPYDYVALMELKKNSEKLAMYGVDPEVVKKIEPIKIIDVPGIKGHHAGIVVEEMGISSQFDPRLVEATKIVYREQYYKGVMIVDDPEFKGLSVSEAKEKIKKKLLRENKGFVFYELNRKAYCRAGGKIIAAKIIGQWFIDYSVPWWKEEAKKYVSEKMRIIPVKYKKAMLDAIDWLERRPCARKRGLGTRLPFDPEWVIESLSDSTIYMAFYTIAHLIRKHNIKPEQLKPQVFDYVFLGKGDPEEISEDTGIPLKALEEMRQEFNYWYPVDQRHTGIAHISNHLSFFIYHHIAIFPRKHWPKMITLNEMVIREGTKMSKSKGNVILLRDIAEKYSADLFRLYIAGAANLDTVLDWREKEVERVIDSLKKFTAIAEKAIRTKCGTYSHDKYIDKWFLSKFNRLLAEATNALDNMEIRDYVQKMFYDVMVSIDHYRERTSNEETICMIKRILSKWLKSLNPVIPHLTEEIWSWMGKEEFLSLEKWPEIDYKAINEEVEYLEEAIEALIEDIKNVLNILSPKPKHAYIVVASPWKREVIEMIEKGMDRREIIRTIRDKYGLKGREKEIVYVIQECSRTPCKRALKIDPIHEYEAYNEARQYIAKKTGLHIEVYWEEEAKAKNIPKAEKTLPLKPSFYLY</sequence>
<reference key="1">
    <citation type="journal article" date="2009" name="BMC Genomics">
        <title>The complete genome sequence of Staphylothermus marinus reveals differences in sulfur metabolism among heterotrophic Crenarchaeota.</title>
        <authorList>
            <person name="Anderson I.J."/>
            <person name="Dharmarajan L."/>
            <person name="Rodriguez J."/>
            <person name="Hooper S."/>
            <person name="Porat I."/>
            <person name="Ulrich L.E."/>
            <person name="Elkins J.G."/>
            <person name="Mavromatis K."/>
            <person name="Sun H."/>
            <person name="Land M."/>
            <person name="Lapidus A."/>
            <person name="Lucas S."/>
            <person name="Barry K."/>
            <person name="Huber H."/>
            <person name="Zhulin I.B."/>
            <person name="Whitman W.B."/>
            <person name="Mukhopadhyay B."/>
            <person name="Woese C."/>
            <person name="Bristow J."/>
            <person name="Kyrpides N."/>
        </authorList>
    </citation>
    <scope>NUCLEOTIDE SEQUENCE [LARGE SCALE GENOMIC DNA]</scope>
    <source>
        <strain>ATCC 43588 / DSM 3639 / JCM 9404 / F1</strain>
    </source>
</reference>
<reference key="2">
    <citation type="journal article" date="2009" name="Stand. Genomic Sci.">
        <title>Complete genome sequence of Staphylothermus marinus Stetter and Fiala 1986 type strain F1.</title>
        <authorList>
            <person name="Anderson I.J."/>
            <person name="Sun H."/>
            <person name="Lapidus A."/>
            <person name="Copeland A."/>
            <person name="Glavina Del Rio T."/>
            <person name="Tice H."/>
            <person name="Dalin E."/>
            <person name="Lucas S."/>
            <person name="Barry K."/>
            <person name="Land M."/>
            <person name="Richardson P."/>
            <person name="Huber H."/>
            <person name="Kyrpides N.C."/>
        </authorList>
    </citation>
    <scope>NUCLEOTIDE SEQUENCE [LARGE SCALE GENOMIC DNA]</scope>
    <source>
        <strain>ATCC 43588 / DSM 3639 / JCM 9404 / F1</strain>
    </source>
</reference>
<feature type="chain" id="PRO_0000334848" description="Leucine--tRNA ligase">
    <location>
        <begin position="1"/>
        <end position="969"/>
    </location>
</feature>
<feature type="short sequence motif" description="'HIGH' region">
    <location>
        <begin position="45"/>
        <end position="55"/>
    </location>
</feature>
<feature type="short sequence motif" description="'KMSKS' region">
    <location>
        <begin position="649"/>
        <end position="653"/>
    </location>
</feature>
<feature type="binding site" evidence="1">
    <location>
        <position position="652"/>
    </location>
    <ligand>
        <name>ATP</name>
        <dbReference type="ChEBI" id="CHEBI:30616"/>
    </ligand>
</feature>